<organism>
    <name type="scientific">Staphylococcus aureus (strain USA300 / TCH1516)</name>
    <dbReference type="NCBI Taxonomy" id="451516"/>
    <lineage>
        <taxon>Bacteria</taxon>
        <taxon>Bacillati</taxon>
        <taxon>Bacillota</taxon>
        <taxon>Bacilli</taxon>
        <taxon>Bacillales</taxon>
        <taxon>Staphylococcaceae</taxon>
        <taxon>Staphylococcus</taxon>
    </lineage>
</organism>
<protein>
    <recommendedName>
        <fullName evidence="1">Probable cell division protein WhiA</fullName>
    </recommendedName>
</protein>
<gene>
    <name evidence="1" type="primary">whiA</name>
    <name type="ordered locus">USA300HOU_0796</name>
</gene>
<name>WHIA_STAAT</name>
<comment type="function">
    <text evidence="1">Involved in cell division and chromosome segregation.</text>
</comment>
<comment type="similarity">
    <text evidence="1">Belongs to the WhiA family.</text>
</comment>
<feature type="chain" id="PRO_0000376563" description="Probable cell division protein WhiA">
    <location>
        <begin position="1"/>
        <end position="314"/>
    </location>
</feature>
<feature type="DNA-binding region" description="H-T-H motif" evidence="1">
    <location>
        <begin position="274"/>
        <end position="308"/>
    </location>
</feature>
<sequence length="314" mass="35868">MSFASEMKNELTRIDVDEMNAKAELSALIRMNGALSLSNQQFVINVQTENATTARRIYSLIKRVFNVEVEILVRKKMKLKKNNIYICRTKMKAKEILDELGILKDGIFTHEIDHSMIQDDEMRRSYLRGAFLAGGSVNNPETSSYHLEIFSQNESHAEGLTKLMNSYELNAKHLERKKGSITYLKEAEKISDFLSLIGGYQALLKFEDVRIVRDMRNSVNRLVNCETANLNKTVSAAMKQVESIKLIDKEIGIENLPDRLREIARIRVEHQEISLKELGEMVSTGPISKSGVNHRLRKLNDLADKIRNGEQIEL</sequence>
<dbReference type="EMBL" id="CP000730">
    <property type="protein sequence ID" value="ABX28817.1"/>
    <property type="molecule type" value="Genomic_DNA"/>
</dbReference>
<dbReference type="RefSeq" id="WP_000006551.1">
    <property type="nucleotide sequence ID" value="NC_010079.1"/>
</dbReference>
<dbReference type="SMR" id="A8Z044"/>
<dbReference type="KEGG" id="sax:USA300HOU_0796"/>
<dbReference type="HOGENOM" id="CLU_053282_0_0_9"/>
<dbReference type="GO" id="GO:0003677">
    <property type="term" value="F:DNA binding"/>
    <property type="evidence" value="ECO:0007669"/>
    <property type="project" value="UniProtKB-UniRule"/>
</dbReference>
<dbReference type="GO" id="GO:0051301">
    <property type="term" value="P:cell division"/>
    <property type="evidence" value="ECO:0007669"/>
    <property type="project" value="UniProtKB-UniRule"/>
</dbReference>
<dbReference type="GO" id="GO:0043937">
    <property type="term" value="P:regulation of sporulation"/>
    <property type="evidence" value="ECO:0007669"/>
    <property type="project" value="InterPro"/>
</dbReference>
<dbReference type="FunFam" id="3.10.28.10:FF:000002">
    <property type="entry name" value="Probable cell division protein WhiA"/>
    <property type="match status" value="1"/>
</dbReference>
<dbReference type="Gene3D" id="3.10.28.10">
    <property type="entry name" value="Homing endonucleases"/>
    <property type="match status" value="1"/>
</dbReference>
<dbReference type="HAMAP" id="MF_01420">
    <property type="entry name" value="HTH_type_WhiA"/>
    <property type="match status" value="1"/>
</dbReference>
<dbReference type="InterPro" id="IPR027434">
    <property type="entry name" value="Homing_endonucl"/>
</dbReference>
<dbReference type="InterPro" id="IPR018478">
    <property type="entry name" value="Sporu_reg_WhiA_N_dom"/>
</dbReference>
<dbReference type="InterPro" id="IPR003802">
    <property type="entry name" value="Sporulation_regulator_WhiA"/>
</dbReference>
<dbReference type="InterPro" id="IPR023054">
    <property type="entry name" value="Sporulation_regulator_WhiA_C"/>
</dbReference>
<dbReference type="InterPro" id="IPR039518">
    <property type="entry name" value="WhiA_LAGLIDADG_dom"/>
</dbReference>
<dbReference type="NCBIfam" id="TIGR00647">
    <property type="entry name" value="DNA_bind_WhiA"/>
    <property type="match status" value="1"/>
</dbReference>
<dbReference type="PANTHER" id="PTHR37307">
    <property type="entry name" value="CELL DIVISION PROTEIN WHIA-RELATED"/>
    <property type="match status" value="1"/>
</dbReference>
<dbReference type="PANTHER" id="PTHR37307:SF1">
    <property type="entry name" value="CELL DIVISION PROTEIN WHIA-RELATED"/>
    <property type="match status" value="1"/>
</dbReference>
<dbReference type="Pfam" id="PF02650">
    <property type="entry name" value="HTH_WhiA"/>
    <property type="match status" value="1"/>
</dbReference>
<dbReference type="Pfam" id="PF14527">
    <property type="entry name" value="LAGLIDADG_WhiA"/>
    <property type="match status" value="1"/>
</dbReference>
<dbReference type="Pfam" id="PF10298">
    <property type="entry name" value="WhiA_N"/>
    <property type="match status" value="1"/>
</dbReference>
<dbReference type="SUPFAM" id="SSF55608">
    <property type="entry name" value="Homing endonucleases"/>
    <property type="match status" value="1"/>
</dbReference>
<keyword id="KW-0131">Cell cycle</keyword>
<keyword id="KW-0132">Cell division</keyword>
<keyword id="KW-0238">DNA-binding</keyword>
<reference key="1">
    <citation type="journal article" date="2007" name="BMC Microbiol.">
        <title>Subtle genetic changes enhance virulence of methicillin resistant and sensitive Staphylococcus aureus.</title>
        <authorList>
            <person name="Highlander S.K."/>
            <person name="Hulten K.G."/>
            <person name="Qin X."/>
            <person name="Jiang H."/>
            <person name="Yerrapragada S."/>
            <person name="Mason E.O. Jr."/>
            <person name="Shang Y."/>
            <person name="Williams T.M."/>
            <person name="Fortunov R.M."/>
            <person name="Liu Y."/>
            <person name="Igboeli O."/>
            <person name="Petrosino J."/>
            <person name="Tirumalai M."/>
            <person name="Uzman A."/>
            <person name="Fox G.E."/>
            <person name="Cardenas A.M."/>
            <person name="Muzny D.M."/>
            <person name="Hemphill L."/>
            <person name="Ding Y."/>
            <person name="Dugan S."/>
            <person name="Blyth P.R."/>
            <person name="Buhay C.J."/>
            <person name="Dinh H.H."/>
            <person name="Hawes A.C."/>
            <person name="Holder M."/>
            <person name="Kovar C.L."/>
            <person name="Lee S.L."/>
            <person name="Liu W."/>
            <person name="Nazareth L.V."/>
            <person name="Wang Q."/>
            <person name="Zhou J."/>
            <person name="Kaplan S.L."/>
            <person name="Weinstock G.M."/>
        </authorList>
    </citation>
    <scope>NUCLEOTIDE SEQUENCE [LARGE SCALE GENOMIC DNA]</scope>
    <source>
        <strain>USA300 / TCH1516</strain>
    </source>
</reference>
<proteinExistence type="inferred from homology"/>
<evidence type="ECO:0000255" key="1">
    <source>
        <dbReference type="HAMAP-Rule" id="MF_01420"/>
    </source>
</evidence>
<accession>A8Z044</accession>